<gene>
    <name evidence="5" type="ordered locus">BH2881</name>
</gene>
<proteinExistence type="evidence at protein level"/>
<organism>
    <name type="scientific">Halalkalibacterium halodurans (strain ATCC BAA-125 / DSM 18197 / FERM 7344 / JCM 9153 / C-125)</name>
    <name type="common">Bacillus halodurans</name>
    <dbReference type="NCBI Taxonomy" id="272558"/>
    <lineage>
        <taxon>Bacteria</taxon>
        <taxon>Bacillati</taxon>
        <taxon>Bacillota</taxon>
        <taxon>Bacilli</taxon>
        <taxon>Bacillales</taxon>
        <taxon>Bacillaceae</taxon>
        <taxon>Halalkalibacterium (ex Joshi et al. 2022)</taxon>
    </lineage>
</organism>
<keyword id="KW-0067">ATP-binding</keyword>
<keyword id="KW-0460">Magnesium</keyword>
<keyword id="KW-0479">Metal-binding</keyword>
<keyword id="KW-0547">Nucleotide-binding</keyword>
<keyword id="KW-0548">Nucleotidyltransferase</keyword>
<keyword id="KW-1185">Reference proteome</keyword>
<keyword id="KW-0694">RNA-binding</keyword>
<keyword id="KW-0808">Transferase</keyword>
<keyword id="KW-0819">tRNA processing</keyword>
<keyword id="KW-0820">tRNA-binding</keyword>
<reference key="1">
    <citation type="journal article" date="2000" name="Nucleic Acids Res.">
        <title>Complete genome sequence of the alkaliphilic bacterium Bacillus halodurans and genomic sequence comparison with Bacillus subtilis.</title>
        <authorList>
            <person name="Takami H."/>
            <person name="Nakasone K."/>
            <person name="Takaki Y."/>
            <person name="Maeno G."/>
            <person name="Sasaki R."/>
            <person name="Masui N."/>
            <person name="Fuji F."/>
            <person name="Hirama C."/>
            <person name="Nakamura Y."/>
            <person name="Ogasawara N."/>
            <person name="Kuhara S."/>
            <person name="Horikoshi K."/>
        </authorList>
    </citation>
    <scope>NUCLEOTIDE SEQUENCE [LARGE SCALE GENOMIC DNA]</scope>
    <source>
        <strain>ATCC BAA-125 / DSM 18197 / FERM 7344 / JCM 9153 / C-125</strain>
    </source>
</reference>
<reference key="2">
    <citation type="journal article" date="2005" name="J. Bacteriol.">
        <title>A phylogeny of bacterial RNA nucleotidyltransferases: Bacillus halodurans contains two tRNA nucleotidyltransferases.</title>
        <authorList>
            <person name="Bralley P."/>
            <person name="Chang S.A."/>
            <person name="Jones G.H."/>
        </authorList>
    </citation>
    <scope>FUNCTION</scope>
    <scope>CATALYTIC ACTIVITY</scope>
    <scope>BIOPHYSICOCHEMICAL PROPERTIES</scope>
</reference>
<dbReference type="EC" id="2.7.7.-" evidence="2"/>
<dbReference type="EMBL" id="BA000004">
    <property type="protein sequence ID" value="BAB06600.1"/>
    <property type="molecule type" value="Genomic_DNA"/>
</dbReference>
<dbReference type="PIR" id="A84010">
    <property type="entry name" value="A84010"/>
</dbReference>
<dbReference type="RefSeq" id="WP_010899028.1">
    <property type="nucleotide sequence ID" value="NC_002570.2"/>
</dbReference>
<dbReference type="SMR" id="Q9K8X1"/>
<dbReference type="STRING" id="272558.gene:10728791"/>
<dbReference type="KEGG" id="bha:BH2881"/>
<dbReference type="eggNOG" id="COG0617">
    <property type="taxonomic scope" value="Bacteria"/>
</dbReference>
<dbReference type="HOGENOM" id="CLU_015961_5_1_9"/>
<dbReference type="OrthoDB" id="9805698at2"/>
<dbReference type="Proteomes" id="UP000001258">
    <property type="component" value="Chromosome"/>
</dbReference>
<dbReference type="GO" id="GO:0005524">
    <property type="term" value="F:ATP binding"/>
    <property type="evidence" value="ECO:0007669"/>
    <property type="project" value="UniProtKB-KW"/>
</dbReference>
<dbReference type="GO" id="GO:0052929">
    <property type="term" value="F:ATP:3'-cytidine-cytidine-tRNA adenylyltransferase activity"/>
    <property type="evidence" value="ECO:0007669"/>
    <property type="project" value="RHEA"/>
</dbReference>
<dbReference type="GO" id="GO:0046872">
    <property type="term" value="F:metal ion binding"/>
    <property type="evidence" value="ECO:0007669"/>
    <property type="project" value="UniProtKB-KW"/>
</dbReference>
<dbReference type="GO" id="GO:0000049">
    <property type="term" value="F:tRNA binding"/>
    <property type="evidence" value="ECO:0007669"/>
    <property type="project" value="UniProtKB-KW"/>
</dbReference>
<dbReference type="GO" id="GO:0008033">
    <property type="term" value="P:tRNA processing"/>
    <property type="evidence" value="ECO:0007669"/>
    <property type="project" value="UniProtKB-KW"/>
</dbReference>
<dbReference type="CDD" id="cd05398">
    <property type="entry name" value="NT_ClassII-CCAase"/>
    <property type="match status" value="1"/>
</dbReference>
<dbReference type="Gene3D" id="3.30.460.10">
    <property type="entry name" value="Beta Polymerase, domain 2"/>
    <property type="match status" value="1"/>
</dbReference>
<dbReference type="Gene3D" id="1.10.3090.10">
    <property type="entry name" value="cca-adding enzyme, domain 2"/>
    <property type="match status" value="1"/>
</dbReference>
<dbReference type="InterPro" id="IPR043519">
    <property type="entry name" value="NT_sf"/>
</dbReference>
<dbReference type="InterPro" id="IPR002646">
    <property type="entry name" value="PolA_pol_head_dom"/>
</dbReference>
<dbReference type="InterPro" id="IPR052390">
    <property type="entry name" value="tRNA_nt/polyA_polymerase"/>
</dbReference>
<dbReference type="PANTHER" id="PTHR47788:SF1">
    <property type="entry name" value="A-ADDING TRNA NUCLEOTIDYLTRANSFERASE"/>
    <property type="match status" value="1"/>
</dbReference>
<dbReference type="PANTHER" id="PTHR47788">
    <property type="entry name" value="POLYA POLYMERASE"/>
    <property type="match status" value="1"/>
</dbReference>
<dbReference type="Pfam" id="PF01743">
    <property type="entry name" value="PolyA_pol"/>
    <property type="match status" value="1"/>
</dbReference>
<dbReference type="SUPFAM" id="SSF81301">
    <property type="entry name" value="Nucleotidyltransferase"/>
    <property type="match status" value="1"/>
</dbReference>
<dbReference type="SUPFAM" id="SSF81891">
    <property type="entry name" value="Poly A polymerase C-terminal region-like"/>
    <property type="match status" value="1"/>
</dbReference>
<evidence type="ECO:0000250" key="1">
    <source>
        <dbReference type="UniProtKB" id="O66728"/>
    </source>
</evidence>
<evidence type="ECO:0000269" key="2">
    <source>
    </source>
</evidence>
<evidence type="ECO:0000303" key="3">
    <source>
    </source>
</evidence>
<evidence type="ECO:0000305" key="4"/>
<evidence type="ECO:0000312" key="5">
    <source>
        <dbReference type="EMBL" id="BAB06600.1"/>
    </source>
</evidence>
<comment type="function">
    <text evidence="2">tRNA nucleotidyltransferase involved in the synthesis of the tRNA CCA terminus. Adds the terminal adenosine residue to tRNA.</text>
</comment>
<comment type="catalytic activity">
    <reaction evidence="2">
        <text>a tRNA with a 3' CC end + ATP = a tRNA with a 3' CCA end + diphosphate</text>
        <dbReference type="Rhea" id="RHEA:60012"/>
        <dbReference type="Rhea" id="RHEA-COMP:10468"/>
        <dbReference type="Rhea" id="RHEA-COMP:15488"/>
        <dbReference type="ChEBI" id="CHEBI:30616"/>
        <dbReference type="ChEBI" id="CHEBI:33019"/>
        <dbReference type="ChEBI" id="CHEBI:83069"/>
        <dbReference type="ChEBI" id="CHEBI:83071"/>
    </reaction>
    <physiologicalReaction direction="left-to-right" evidence="2">
        <dbReference type="Rhea" id="RHEA:60013"/>
    </physiologicalReaction>
</comment>
<comment type="cofactor">
    <cofactor evidence="1">
        <name>Mg(2+)</name>
        <dbReference type="ChEBI" id="CHEBI:18420"/>
    </cofactor>
</comment>
<comment type="biophysicochemical properties">
    <phDependence>
        <text evidence="2">Optimum pH is 8.</text>
    </phDependence>
</comment>
<comment type="similarity">
    <text evidence="4">Belongs to the tRNA nucleotidyltransferase/poly(A) polymerase family.</text>
</comment>
<sequence length="427" mass="48501">MSEEHQESYHSDNLIDLMNHTLTNDHLQLLKKLGEMAAKLRMNLFLVGGTVRDMLRGVPGGDLDLVIEGDALAFSQNVANVLGGKVKHHEPFATATWVGAENLKLDIVSARAESYAKPGALPTIRHSHITDDLARRDFSINAMAIHLHPASYGQLVDPFHGRHDLTNGLIRILHSQSFIDDPTRLLRGVRFVSRFNYRFEQKTANLALATQPALTNALANVSPERIVHELKLLCHETDPVSSFSKLEDLHVWQALLGLTFSSSSATHLSRLQEEQNGEPLHWFQAIATVGFLEDNWKASLVPFAITAMEQRFLQNIEDIQKRLTNMTRFSTDYLHKQLYQVPEEPLRFYALSSGEEMQKVLDLYLHQRKQLQPLLTGHDLMELGMKPSPLFKECLLLHECEQLKGTIENKQDALQFAREFFNHKQPL</sequence>
<accession>Q9K8X1</accession>
<feature type="chain" id="PRO_0000447564" description="A-adding tRNA nucleotidyltransferase">
    <location>
        <begin position="1"/>
        <end position="427"/>
    </location>
</feature>
<feature type="binding site" evidence="1">
    <location>
        <begin position="49"/>
        <end position="52"/>
    </location>
    <ligand>
        <name>ATP</name>
        <dbReference type="ChEBI" id="CHEBI:30616"/>
    </ligand>
</feature>
<feature type="binding site" evidence="1">
    <location>
        <position position="62"/>
    </location>
    <ligand>
        <name>Mg(2+)</name>
        <dbReference type="ChEBI" id="CHEBI:18420"/>
    </ligand>
</feature>
<feature type="binding site" evidence="1">
    <location>
        <position position="64"/>
    </location>
    <ligand>
        <name>Mg(2+)</name>
        <dbReference type="ChEBI" id="CHEBI:18420"/>
    </ligand>
</feature>
<feature type="binding site" evidence="1">
    <location>
        <begin position="136"/>
        <end position="137"/>
    </location>
    <ligand>
        <name>ATP</name>
        <dbReference type="ChEBI" id="CHEBI:30616"/>
    </ligand>
</feature>
<feature type="binding site" evidence="1">
    <location>
        <position position="141"/>
    </location>
    <ligand>
        <name>ATP</name>
        <dbReference type="ChEBI" id="CHEBI:30616"/>
    </ligand>
</feature>
<feature type="binding site" evidence="1">
    <location>
        <begin position="181"/>
        <end position="190"/>
    </location>
    <ligand>
        <name>ATP</name>
        <dbReference type="ChEBI" id="CHEBI:30616"/>
    </ligand>
</feature>
<feature type="binding site" evidence="1">
    <location>
        <position position="194"/>
    </location>
    <ligand>
        <name>ATP</name>
        <dbReference type="ChEBI" id="CHEBI:30616"/>
    </ligand>
</feature>
<feature type="binding site" evidence="1">
    <location>
        <position position="225"/>
    </location>
    <ligand>
        <name>ATP</name>
        <dbReference type="ChEBI" id="CHEBI:30616"/>
    </ligand>
</feature>
<name>AATNT_HALH5</name>
<protein>
    <recommendedName>
        <fullName evidence="3">A-adding tRNA nucleotidyltransferase</fullName>
        <shortName evidence="4">A-adding TNT</shortName>
        <ecNumber evidence="2">2.7.7.-</ecNumber>
    </recommendedName>
    <alternativeName>
        <fullName evidence="3">A-adding enzyme</fullName>
    </alternativeName>
    <alternativeName>
        <fullName evidence="3">NTSFII</fullName>
    </alternativeName>
</protein>